<feature type="chain" id="PRO_1000195497" description="6,7-dimethyl-8-ribityllumazine synthase">
    <location>
        <begin position="1"/>
        <end position="173"/>
    </location>
</feature>
<feature type="active site" description="Proton donor" evidence="1">
    <location>
        <position position="102"/>
    </location>
</feature>
<feature type="binding site" evidence="1">
    <location>
        <position position="34"/>
    </location>
    <ligand>
        <name>5-amino-6-(D-ribitylamino)uracil</name>
        <dbReference type="ChEBI" id="CHEBI:15934"/>
    </ligand>
</feature>
<feature type="binding site" evidence="1">
    <location>
        <begin position="65"/>
        <end position="67"/>
    </location>
    <ligand>
        <name>5-amino-6-(D-ribitylamino)uracil</name>
        <dbReference type="ChEBI" id="CHEBI:15934"/>
    </ligand>
</feature>
<feature type="binding site" evidence="1">
    <location>
        <begin position="94"/>
        <end position="96"/>
    </location>
    <ligand>
        <name>5-amino-6-(D-ribitylamino)uracil</name>
        <dbReference type="ChEBI" id="CHEBI:15934"/>
    </ligand>
</feature>
<feature type="binding site" evidence="1">
    <location>
        <begin position="99"/>
        <end position="100"/>
    </location>
    <ligand>
        <name>(2S)-2-hydroxy-3-oxobutyl phosphate</name>
        <dbReference type="ChEBI" id="CHEBI:58830"/>
    </ligand>
</feature>
<feature type="binding site" evidence="1">
    <location>
        <position position="127"/>
    </location>
    <ligand>
        <name>5-amino-6-(D-ribitylamino)uracil</name>
        <dbReference type="ChEBI" id="CHEBI:15934"/>
    </ligand>
</feature>
<feature type="binding site" evidence="1">
    <location>
        <position position="141"/>
    </location>
    <ligand>
        <name>(2S)-2-hydroxy-3-oxobutyl phosphate</name>
        <dbReference type="ChEBI" id="CHEBI:58830"/>
    </ligand>
</feature>
<dbReference type="EC" id="2.5.1.78" evidence="1"/>
<dbReference type="EMBL" id="CP000908">
    <property type="protein sequence ID" value="ABY31550.1"/>
    <property type="molecule type" value="Genomic_DNA"/>
</dbReference>
<dbReference type="RefSeq" id="WP_003605626.1">
    <property type="nucleotide sequence ID" value="NC_010172.1"/>
</dbReference>
<dbReference type="SMR" id="A9VYV8"/>
<dbReference type="GeneID" id="72990808"/>
<dbReference type="KEGG" id="mex:Mext_3162"/>
<dbReference type="eggNOG" id="COG0054">
    <property type="taxonomic scope" value="Bacteria"/>
</dbReference>
<dbReference type="HOGENOM" id="CLU_089358_1_2_5"/>
<dbReference type="BioCyc" id="MEXT419610:MEXT_RS15895-MONOMER"/>
<dbReference type="UniPathway" id="UPA00275">
    <property type="reaction ID" value="UER00404"/>
</dbReference>
<dbReference type="GO" id="GO:0005829">
    <property type="term" value="C:cytosol"/>
    <property type="evidence" value="ECO:0007669"/>
    <property type="project" value="TreeGrafter"/>
</dbReference>
<dbReference type="GO" id="GO:0009349">
    <property type="term" value="C:riboflavin synthase complex"/>
    <property type="evidence" value="ECO:0007669"/>
    <property type="project" value="InterPro"/>
</dbReference>
<dbReference type="GO" id="GO:0000906">
    <property type="term" value="F:6,7-dimethyl-8-ribityllumazine synthase activity"/>
    <property type="evidence" value="ECO:0007669"/>
    <property type="project" value="UniProtKB-UniRule"/>
</dbReference>
<dbReference type="GO" id="GO:0009231">
    <property type="term" value="P:riboflavin biosynthetic process"/>
    <property type="evidence" value="ECO:0007669"/>
    <property type="project" value="UniProtKB-UniRule"/>
</dbReference>
<dbReference type="CDD" id="cd09209">
    <property type="entry name" value="Lumazine_synthase-I"/>
    <property type="match status" value="1"/>
</dbReference>
<dbReference type="Gene3D" id="3.40.50.960">
    <property type="entry name" value="Lumazine/riboflavin synthase"/>
    <property type="match status" value="1"/>
</dbReference>
<dbReference type="HAMAP" id="MF_00178">
    <property type="entry name" value="Lumazine_synth"/>
    <property type="match status" value="1"/>
</dbReference>
<dbReference type="InterPro" id="IPR034964">
    <property type="entry name" value="LS"/>
</dbReference>
<dbReference type="InterPro" id="IPR002180">
    <property type="entry name" value="LS/RS"/>
</dbReference>
<dbReference type="InterPro" id="IPR036467">
    <property type="entry name" value="LS/RS_sf"/>
</dbReference>
<dbReference type="NCBIfam" id="TIGR00114">
    <property type="entry name" value="lumazine-synth"/>
    <property type="match status" value="1"/>
</dbReference>
<dbReference type="PANTHER" id="PTHR21058:SF0">
    <property type="entry name" value="6,7-DIMETHYL-8-RIBITYLLUMAZINE SYNTHASE"/>
    <property type="match status" value="1"/>
</dbReference>
<dbReference type="PANTHER" id="PTHR21058">
    <property type="entry name" value="6,7-DIMETHYL-8-RIBITYLLUMAZINE SYNTHASE DMRL SYNTHASE LUMAZINE SYNTHASE"/>
    <property type="match status" value="1"/>
</dbReference>
<dbReference type="Pfam" id="PF00885">
    <property type="entry name" value="DMRL_synthase"/>
    <property type="match status" value="1"/>
</dbReference>
<dbReference type="SUPFAM" id="SSF52121">
    <property type="entry name" value="Lumazine synthase"/>
    <property type="match status" value="1"/>
</dbReference>
<organism>
    <name type="scientific">Methylorubrum extorquens (strain PA1)</name>
    <name type="common">Methylobacterium extorquens</name>
    <dbReference type="NCBI Taxonomy" id="419610"/>
    <lineage>
        <taxon>Bacteria</taxon>
        <taxon>Pseudomonadati</taxon>
        <taxon>Pseudomonadota</taxon>
        <taxon>Alphaproteobacteria</taxon>
        <taxon>Hyphomicrobiales</taxon>
        <taxon>Methylobacteriaceae</taxon>
        <taxon>Methylorubrum</taxon>
    </lineage>
</organism>
<keyword id="KW-0686">Riboflavin biosynthesis</keyword>
<keyword id="KW-0808">Transferase</keyword>
<protein>
    <recommendedName>
        <fullName evidence="1">6,7-dimethyl-8-ribityllumazine synthase</fullName>
        <shortName evidence="1">DMRL synthase</shortName>
        <shortName evidence="1">LS</shortName>
        <shortName evidence="1">Lumazine synthase</shortName>
        <ecNumber evidence="1">2.5.1.78</ecNumber>
    </recommendedName>
</protein>
<accession>A9VYV8</accession>
<reference key="1">
    <citation type="submission" date="2007-12" db="EMBL/GenBank/DDBJ databases">
        <title>Complete sequence of Methylobacterium extorquens PA1.</title>
        <authorList>
            <consortium name="US DOE Joint Genome Institute"/>
            <person name="Copeland A."/>
            <person name="Lucas S."/>
            <person name="Lapidus A."/>
            <person name="Barry K."/>
            <person name="Glavina del Rio T."/>
            <person name="Dalin E."/>
            <person name="Tice H."/>
            <person name="Pitluck S."/>
            <person name="Saunders E."/>
            <person name="Brettin T."/>
            <person name="Bruce D."/>
            <person name="Detter J.C."/>
            <person name="Han C."/>
            <person name="Schmutz J."/>
            <person name="Larimer F."/>
            <person name="Land M."/>
            <person name="Hauser L."/>
            <person name="Kyrpides N."/>
            <person name="Kim E."/>
            <person name="Marx C."/>
            <person name="Richardson P."/>
        </authorList>
    </citation>
    <scope>NUCLEOTIDE SEQUENCE [LARGE SCALE GENOMIC DNA]</scope>
    <source>
        <strain>PA1</strain>
    </source>
</reference>
<comment type="function">
    <text evidence="1">Catalyzes the formation of 6,7-dimethyl-8-ribityllumazine by condensation of 5-amino-6-(D-ribitylamino)uracil with 3,4-dihydroxy-2-butanone 4-phosphate. This is the penultimate step in the biosynthesis of riboflavin.</text>
</comment>
<comment type="catalytic activity">
    <reaction evidence="1">
        <text>(2S)-2-hydroxy-3-oxobutyl phosphate + 5-amino-6-(D-ribitylamino)uracil = 6,7-dimethyl-8-(1-D-ribityl)lumazine + phosphate + 2 H2O + H(+)</text>
        <dbReference type="Rhea" id="RHEA:26152"/>
        <dbReference type="ChEBI" id="CHEBI:15377"/>
        <dbReference type="ChEBI" id="CHEBI:15378"/>
        <dbReference type="ChEBI" id="CHEBI:15934"/>
        <dbReference type="ChEBI" id="CHEBI:43474"/>
        <dbReference type="ChEBI" id="CHEBI:58201"/>
        <dbReference type="ChEBI" id="CHEBI:58830"/>
        <dbReference type="EC" id="2.5.1.78"/>
    </reaction>
</comment>
<comment type="pathway">
    <text evidence="1">Cofactor biosynthesis; riboflavin biosynthesis; riboflavin from 2-hydroxy-3-oxobutyl phosphate and 5-amino-6-(D-ribitylamino)uracil: step 1/2.</text>
</comment>
<comment type="similarity">
    <text evidence="1">Belongs to the DMRL synthase family.</text>
</comment>
<proteinExistence type="inferred from homology"/>
<evidence type="ECO:0000255" key="1">
    <source>
        <dbReference type="HAMAP-Rule" id="MF_00178"/>
    </source>
</evidence>
<gene>
    <name evidence="1" type="primary">ribH</name>
    <name type="ordered locus">Mext_3162</name>
</gene>
<sequence>MVSQRRDADAPKDSPKSILESLAGTRVLVVEARYYDDIADELLAGARAAIEAVGAEARVFTVPGALEIPAAIAILMDAGRKAGGPYDAAVALGCVIRGETGHYDIVAGESARALMDLSVAEHLPLGNGILTVETMEQALARARVSDMNKGGGAAEAALSLLAIKRAANLEPAR</sequence>
<name>RISB_METEP</name>